<accession>B8CVJ1</accession>
<name>HLDE_SHEPW</name>
<gene>
    <name evidence="1" type="primary">hldE</name>
    <name type="ordered locus">swp_5053</name>
</gene>
<organism>
    <name type="scientific">Shewanella piezotolerans (strain WP3 / JCM 13877)</name>
    <dbReference type="NCBI Taxonomy" id="225849"/>
    <lineage>
        <taxon>Bacteria</taxon>
        <taxon>Pseudomonadati</taxon>
        <taxon>Pseudomonadota</taxon>
        <taxon>Gammaproteobacteria</taxon>
        <taxon>Alteromonadales</taxon>
        <taxon>Shewanellaceae</taxon>
        <taxon>Shewanella</taxon>
    </lineage>
</organism>
<keyword id="KW-0067">ATP-binding</keyword>
<keyword id="KW-0119">Carbohydrate metabolism</keyword>
<keyword id="KW-0418">Kinase</keyword>
<keyword id="KW-0511">Multifunctional enzyme</keyword>
<keyword id="KW-0547">Nucleotide-binding</keyword>
<keyword id="KW-0548">Nucleotidyltransferase</keyword>
<keyword id="KW-0808">Transferase</keyword>
<proteinExistence type="inferred from homology"/>
<sequence length="477" mass="50868">MKDSLPAFEKAKVLVVGDVMLDRYWTGPTGRISPEAPVPVVRINQLEDRPGGAANVALNIATLGGQVSLAGIVGEDETAAALTTGIQALGVEPKWHVVADKPTITKLRVMSRSQQLIRLDFEEPYQQADSQALLDSAANSLADVDVVILSDYAKGALIEPLAFIQQAKSQGVKVLVDPKGSDFSKYRGATLLTPNLHEFELVAGAVTSEADLVEKAHKLLEEFDLEALLVTRSEQGMTLITAENKELHIPTVAREVHDVTGAGDTVISALATSLAAGSTMAEACAIANTAAGIVVAKLGTSTVSRIELIESLSDTHHSETGFGVVTEDQLMYALEQTRLRGERVVMTNGCFDILHAGHVSYLQEAQAQGDRLIVAVNDDDSVRRLKGDGRPVNPVGRRMAVLAGLASVDWVLPFSEDTPQRVIARLLPDLLVKGGDYKIEDIAGGKEVIAAGGLVKILCFEDGISTTKIIENIMANQ</sequence>
<comment type="function">
    <text evidence="1">Catalyzes the phosphorylation of D-glycero-D-manno-heptose 7-phosphate at the C-1 position to selectively form D-glycero-beta-D-manno-heptose-1,7-bisphosphate.</text>
</comment>
<comment type="function">
    <text evidence="1">Catalyzes the ADP transfer from ATP to D-glycero-beta-D-manno-heptose 1-phosphate, yielding ADP-D-glycero-beta-D-manno-heptose.</text>
</comment>
<comment type="catalytic activity">
    <reaction evidence="1">
        <text>D-glycero-beta-D-manno-heptose 7-phosphate + ATP = D-glycero-beta-D-manno-heptose 1,7-bisphosphate + ADP + H(+)</text>
        <dbReference type="Rhea" id="RHEA:27473"/>
        <dbReference type="ChEBI" id="CHEBI:15378"/>
        <dbReference type="ChEBI" id="CHEBI:30616"/>
        <dbReference type="ChEBI" id="CHEBI:60204"/>
        <dbReference type="ChEBI" id="CHEBI:60208"/>
        <dbReference type="ChEBI" id="CHEBI:456216"/>
        <dbReference type="EC" id="2.7.1.167"/>
    </reaction>
</comment>
<comment type="catalytic activity">
    <reaction evidence="1">
        <text>D-glycero-beta-D-manno-heptose 1-phosphate + ATP + H(+) = ADP-D-glycero-beta-D-manno-heptose + diphosphate</text>
        <dbReference type="Rhea" id="RHEA:27465"/>
        <dbReference type="ChEBI" id="CHEBI:15378"/>
        <dbReference type="ChEBI" id="CHEBI:30616"/>
        <dbReference type="ChEBI" id="CHEBI:33019"/>
        <dbReference type="ChEBI" id="CHEBI:59967"/>
        <dbReference type="ChEBI" id="CHEBI:61593"/>
        <dbReference type="EC" id="2.7.7.70"/>
    </reaction>
</comment>
<comment type="pathway">
    <text evidence="1">Nucleotide-sugar biosynthesis; ADP-L-glycero-beta-D-manno-heptose biosynthesis; ADP-L-glycero-beta-D-manno-heptose from D-glycero-beta-D-manno-heptose 7-phosphate: step 1/4.</text>
</comment>
<comment type="pathway">
    <text evidence="1">Nucleotide-sugar biosynthesis; ADP-L-glycero-beta-D-manno-heptose biosynthesis; ADP-L-glycero-beta-D-manno-heptose from D-glycero-beta-D-manno-heptose 7-phosphate: step 3/4.</text>
</comment>
<comment type="subunit">
    <text evidence="1">Homodimer.</text>
</comment>
<comment type="similarity">
    <text evidence="1">In the N-terminal section; belongs to the carbohydrate kinase PfkB family.</text>
</comment>
<comment type="similarity">
    <text evidence="1">In the C-terminal section; belongs to the cytidylyltransferase family.</text>
</comment>
<feature type="chain" id="PRO_1000148134" description="Bifunctional protein HldE">
    <location>
        <begin position="1"/>
        <end position="477"/>
    </location>
</feature>
<feature type="region of interest" description="Ribokinase">
    <location>
        <begin position="1"/>
        <end position="320"/>
    </location>
</feature>
<feature type="region of interest" description="Cytidylyltransferase">
    <location>
        <begin position="346"/>
        <end position="477"/>
    </location>
</feature>
<feature type="active site" evidence="1">
    <location>
        <position position="264"/>
    </location>
</feature>
<feature type="binding site" evidence="1">
    <location>
        <begin position="195"/>
        <end position="198"/>
    </location>
    <ligand>
        <name>ATP</name>
        <dbReference type="ChEBI" id="CHEBI:30616"/>
    </ligand>
</feature>
<dbReference type="EC" id="2.7.1.167" evidence="1"/>
<dbReference type="EC" id="2.7.7.70" evidence="1"/>
<dbReference type="EMBL" id="CP000472">
    <property type="protein sequence ID" value="ACJ31667.1"/>
    <property type="molecule type" value="Genomic_DNA"/>
</dbReference>
<dbReference type="RefSeq" id="WP_020914996.1">
    <property type="nucleotide sequence ID" value="NC_011566.1"/>
</dbReference>
<dbReference type="SMR" id="B8CVJ1"/>
<dbReference type="STRING" id="225849.swp_5053"/>
<dbReference type="KEGG" id="swp:swp_5053"/>
<dbReference type="eggNOG" id="COG0615">
    <property type="taxonomic scope" value="Bacteria"/>
</dbReference>
<dbReference type="eggNOG" id="COG2870">
    <property type="taxonomic scope" value="Bacteria"/>
</dbReference>
<dbReference type="HOGENOM" id="CLU_021150_2_1_6"/>
<dbReference type="OrthoDB" id="9802794at2"/>
<dbReference type="UniPathway" id="UPA00356">
    <property type="reaction ID" value="UER00437"/>
</dbReference>
<dbReference type="UniPathway" id="UPA00356">
    <property type="reaction ID" value="UER00439"/>
</dbReference>
<dbReference type="Proteomes" id="UP000000753">
    <property type="component" value="Chromosome"/>
</dbReference>
<dbReference type="GO" id="GO:0005829">
    <property type="term" value="C:cytosol"/>
    <property type="evidence" value="ECO:0007669"/>
    <property type="project" value="TreeGrafter"/>
</dbReference>
<dbReference type="GO" id="GO:0005524">
    <property type="term" value="F:ATP binding"/>
    <property type="evidence" value="ECO:0007669"/>
    <property type="project" value="UniProtKB-UniRule"/>
</dbReference>
<dbReference type="GO" id="GO:0033785">
    <property type="term" value="F:heptose 7-phosphate kinase activity"/>
    <property type="evidence" value="ECO:0007669"/>
    <property type="project" value="UniProtKB-UniRule"/>
</dbReference>
<dbReference type="GO" id="GO:0033786">
    <property type="term" value="F:heptose-1-phosphate adenylyltransferase activity"/>
    <property type="evidence" value="ECO:0007669"/>
    <property type="project" value="UniProtKB-UniRule"/>
</dbReference>
<dbReference type="GO" id="GO:0016773">
    <property type="term" value="F:phosphotransferase activity, alcohol group as acceptor"/>
    <property type="evidence" value="ECO:0007669"/>
    <property type="project" value="InterPro"/>
</dbReference>
<dbReference type="GO" id="GO:0097171">
    <property type="term" value="P:ADP-L-glycero-beta-D-manno-heptose biosynthetic process"/>
    <property type="evidence" value="ECO:0007669"/>
    <property type="project" value="UniProtKB-UniPathway"/>
</dbReference>
<dbReference type="CDD" id="cd01172">
    <property type="entry name" value="RfaE_like"/>
    <property type="match status" value="1"/>
</dbReference>
<dbReference type="FunFam" id="3.40.1190.20:FF:000002">
    <property type="entry name" value="Bifunctional protein HldE"/>
    <property type="match status" value="1"/>
</dbReference>
<dbReference type="FunFam" id="3.40.50.620:FF:000028">
    <property type="entry name" value="Bifunctional protein HldE"/>
    <property type="match status" value="1"/>
</dbReference>
<dbReference type="Gene3D" id="3.40.1190.20">
    <property type="match status" value="1"/>
</dbReference>
<dbReference type="Gene3D" id="3.40.50.620">
    <property type="entry name" value="HUPs"/>
    <property type="match status" value="1"/>
</dbReference>
<dbReference type="HAMAP" id="MF_01603">
    <property type="entry name" value="HldE"/>
    <property type="match status" value="1"/>
</dbReference>
<dbReference type="InterPro" id="IPR023030">
    <property type="entry name" value="Bifunc_HldE"/>
</dbReference>
<dbReference type="InterPro" id="IPR002173">
    <property type="entry name" value="Carboh/pur_kinase_PfkB_CS"/>
</dbReference>
<dbReference type="InterPro" id="IPR004821">
    <property type="entry name" value="Cyt_trans-like"/>
</dbReference>
<dbReference type="InterPro" id="IPR011611">
    <property type="entry name" value="PfkB_dom"/>
</dbReference>
<dbReference type="InterPro" id="IPR011913">
    <property type="entry name" value="RfaE_dom_I"/>
</dbReference>
<dbReference type="InterPro" id="IPR011914">
    <property type="entry name" value="RfaE_dom_II"/>
</dbReference>
<dbReference type="InterPro" id="IPR029056">
    <property type="entry name" value="Ribokinase-like"/>
</dbReference>
<dbReference type="InterPro" id="IPR014729">
    <property type="entry name" value="Rossmann-like_a/b/a_fold"/>
</dbReference>
<dbReference type="NCBIfam" id="TIGR00125">
    <property type="entry name" value="cyt_tran_rel"/>
    <property type="match status" value="1"/>
</dbReference>
<dbReference type="NCBIfam" id="NF008454">
    <property type="entry name" value="PRK11316.1"/>
    <property type="match status" value="1"/>
</dbReference>
<dbReference type="NCBIfam" id="TIGR02198">
    <property type="entry name" value="rfaE_dom_I"/>
    <property type="match status" value="1"/>
</dbReference>
<dbReference type="NCBIfam" id="TIGR02199">
    <property type="entry name" value="rfaE_dom_II"/>
    <property type="match status" value="1"/>
</dbReference>
<dbReference type="PANTHER" id="PTHR46969">
    <property type="entry name" value="BIFUNCTIONAL PROTEIN HLDE"/>
    <property type="match status" value="1"/>
</dbReference>
<dbReference type="PANTHER" id="PTHR46969:SF1">
    <property type="entry name" value="BIFUNCTIONAL PROTEIN HLDE"/>
    <property type="match status" value="1"/>
</dbReference>
<dbReference type="Pfam" id="PF01467">
    <property type="entry name" value="CTP_transf_like"/>
    <property type="match status" value="1"/>
</dbReference>
<dbReference type="Pfam" id="PF00294">
    <property type="entry name" value="PfkB"/>
    <property type="match status" value="1"/>
</dbReference>
<dbReference type="SUPFAM" id="SSF52374">
    <property type="entry name" value="Nucleotidylyl transferase"/>
    <property type="match status" value="1"/>
</dbReference>
<dbReference type="SUPFAM" id="SSF53613">
    <property type="entry name" value="Ribokinase-like"/>
    <property type="match status" value="1"/>
</dbReference>
<dbReference type="PROSITE" id="PS00583">
    <property type="entry name" value="PFKB_KINASES_1"/>
    <property type="match status" value="1"/>
</dbReference>
<dbReference type="PROSITE" id="PS00584">
    <property type="entry name" value="PFKB_KINASES_2"/>
    <property type="match status" value="1"/>
</dbReference>
<protein>
    <recommendedName>
        <fullName evidence="1">Bifunctional protein HldE</fullName>
    </recommendedName>
    <domain>
        <recommendedName>
            <fullName evidence="1">D-beta-D-heptose 7-phosphate kinase</fullName>
            <ecNumber evidence="1">2.7.1.167</ecNumber>
        </recommendedName>
        <alternativeName>
            <fullName evidence="1">D-beta-D-heptose 7-phosphotransferase</fullName>
        </alternativeName>
        <alternativeName>
            <fullName evidence="1">D-glycero-beta-D-manno-heptose-7-phosphate kinase</fullName>
        </alternativeName>
    </domain>
    <domain>
        <recommendedName>
            <fullName evidence="1">D-beta-D-heptose 1-phosphate adenylyltransferase</fullName>
            <ecNumber evidence="1">2.7.7.70</ecNumber>
        </recommendedName>
        <alternativeName>
            <fullName evidence="1">D-glycero-beta-D-manno-heptose 1-phosphate adenylyltransferase</fullName>
        </alternativeName>
    </domain>
</protein>
<reference key="1">
    <citation type="journal article" date="2008" name="PLoS ONE">
        <title>Environmental adaptation: genomic analysis of the piezotolerant and psychrotolerant deep-sea iron reducing bacterium Shewanella piezotolerans WP3.</title>
        <authorList>
            <person name="Wang F."/>
            <person name="Wang J."/>
            <person name="Jian H."/>
            <person name="Zhang B."/>
            <person name="Li S."/>
            <person name="Wang F."/>
            <person name="Zeng X."/>
            <person name="Gao L."/>
            <person name="Bartlett D.H."/>
            <person name="Yu J."/>
            <person name="Hu S."/>
            <person name="Xiao X."/>
        </authorList>
    </citation>
    <scope>NUCLEOTIDE SEQUENCE [LARGE SCALE GENOMIC DNA]</scope>
    <source>
        <strain>WP3 / JCM 13877</strain>
    </source>
</reference>
<evidence type="ECO:0000255" key="1">
    <source>
        <dbReference type="HAMAP-Rule" id="MF_01603"/>
    </source>
</evidence>